<sequence>MTLPPLSHLDRLEAESIHILREVAAEFRVPVMLYSVGKDSSVLLHLLLKAFAPSRPPIPLLHIDTRWKFREMIAFRDRRAAETGVDLRVHINPDGVMQDVGPISHGAAVHTDIMKTQGLKQALEHGGFDAAIGGARRDEEKSRAKERVFSFRTARHRWDPKNQRPELWNLYNARTGPGESVRVFPLSNWTELDIWLYIYREKIPVVPLYFAAPRPVVERDGAWIMVDDARLPLHPGETPQLRSVRFRTLGCYPLTGAIDSNADTLEAVIAEMLVNTSSERQGRMIDHAPGASMEQKKLEGYF</sequence>
<gene>
    <name evidence="1" type="primary">cysD</name>
    <name type="ordered locus">XAC3329</name>
</gene>
<comment type="function">
    <text evidence="1">With CysN forms the ATP sulfurylase (ATPS) that catalyzes the adenylation of sulfate producing adenosine 5'-phosphosulfate (APS) and diphosphate, the first enzymatic step in sulfur assimilation pathway. APS synthesis involves the formation of a high-energy phosphoric-sulfuric acid anhydride bond driven by GTP hydrolysis by CysN coupled to ATP hydrolysis by CysD.</text>
</comment>
<comment type="catalytic activity">
    <reaction evidence="1">
        <text>sulfate + ATP + H(+) = adenosine 5'-phosphosulfate + diphosphate</text>
        <dbReference type="Rhea" id="RHEA:18133"/>
        <dbReference type="ChEBI" id="CHEBI:15378"/>
        <dbReference type="ChEBI" id="CHEBI:16189"/>
        <dbReference type="ChEBI" id="CHEBI:30616"/>
        <dbReference type="ChEBI" id="CHEBI:33019"/>
        <dbReference type="ChEBI" id="CHEBI:58243"/>
        <dbReference type="EC" id="2.7.7.4"/>
    </reaction>
</comment>
<comment type="pathway">
    <text evidence="1">Sulfur metabolism; hydrogen sulfide biosynthesis; sulfite from sulfate: step 1/3.</text>
</comment>
<comment type="subunit">
    <text evidence="1">Heterodimer composed of CysD, the smaller subunit, and CysN.</text>
</comment>
<comment type="similarity">
    <text evidence="1">Belongs to the PAPS reductase family. CysD subfamily.</text>
</comment>
<protein>
    <recommendedName>
        <fullName evidence="1">Sulfate adenylyltransferase subunit 2</fullName>
        <ecNumber evidence="1">2.7.7.4</ecNumber>
    </recommendedName>
    <alternativeName>
        <fullName evidence="1">ATP-sulfurylase small subunit</fullName>
    </alternativeName>
    <alternativeName>
        <fullName evidence="1">Sulfate adenylate transferase</fullName>
        <shortName evidence="1">SAT</shortName>
    </alternativeName>
</protein>
<accession>Q8PHD0</accession>
<name>CYSD_XANAC</name>
<dbReference type="EC" id="2.7.7.4" evidence="1"/>
<dbReference type="EMBL" id="AE008923">
    <property type="protein sequence ID" value="AAM38172.1"/>
    <property type="molecule type" value="Genomic_DNA"/>
</dbReference>
<dbReference type="RefSeq" id="WP_011052198.1">
    <property type="nucleotide sequence ID" value="NC_003919.1"/>
</dbReference>
<dbReference type="SMR" id="Q8PHD0"/>
<dbReference type="GeneID" id="66912380"/>
<dbReference type="KEGG" id="xac:XAC3329"/>
<dbReference type="eggNOG" id="COG0175">
    <property type="taxonomic scope" value="Bacteria"/>
</dbReference>
<dbReference type="HOGENOM" id="CLU_043026_0_0_6"/>
<dbReference type="UniPathway" id="UPA00140">
    <property type="reaction ID" value="UER00204"/>
</dbReference>
<dbReference type="Proteomes" id="UP000000576">
    <property type="component" value="Chromosome"/>
</dbReference>
<dbReference type="GO" id="GO:0005524">
    <property type="term" value="F:ATP binding"/>
    <property type="evidence" value="ECO:0007669"/>
    <property type="project" value="UniProtKB-KW"/>
</dbReference>
<dbReference type="GO" id="GO:0004781">
    <property type="term" value="F:sulfate adenylyltransferase (ATP) activity"/>
    <property type="evidence" value="ECO:0007669"/>
    <property type="project" value="UniProtKB-UniRule"/>
</dbReference>
<dbReference type="GO" id="GO:0070814">
    <property type="term" value="P:hydrogen sulfide biosynthetic process"/>
    <property type="evidence" value="ECO:0007669"/>
    <property type="project" value="UniProtKB-UniRule"/>
</dbReference>
<dbReference type="GO" id="GO:0000103">
    <property type="term" value="P:sulfate assimilation"/>
    <property type="evidence" value="ECO:0007669"/>
    <property type="project" value="UniProtKB-UniRule"/>
</dbReference>
<dbReference type="CDD" id="cd23946">
    <property type="entry name" value="Sulfate_adenylyltransferase_2"/>
    <property type="match status" value="1"/>
</dbReference>
<dbReference type="FunFam" id="3.40.50.620:FF:000002">
    <property type="entry name" value="Sulfate adenylyltransferase subunit 2"/>
    <property type="match status" value="1"/>
</dbReference>
<dbReference type="Gene3D" id="3.40.50.620">
    <property type="entry name" value="HUPs"/>
    <property type="match status" value="1"/>
</dbReference>
<dbReference type="HAMAP" id="MF_00064">
    <property type="entry name" value="Sulf_adenylyltr_sub2"/>
    <property type="match status" value="1"/>
</dbReference>
<dbReference type="InterPro" id="IPR002500">
    <property type="entry name" value="PAPS_reduct_dom"/>
</dbReference>
<dbReference type="InterPro" id="IPR014729">
    <property type="entry name" value="Rossmann-like_a/b/a_fold"/>
</dbReference>
<dbReference type="InterPro" id="IPR011784">
    <property type="entry name" value="SO4_adenylTrfase_ssu"/>
</dbReference>
<dbReference type="InterPro" id="IPR050128">
    <property type="entry name" value="Sulfate_adenylyltrnsfr_sub2"/>
</dbReference>
<dbReference type="NCBIfam" id="TIGR02039">
    <property type="entry name" value="CysD"/>
    <property type="match status" value="1"/>
</dbReference>
<dbReference type="NCBIfam" id="NF003587">
    <property type="entry name" value="PRK05253.1"/>
    <property type="match status" value="1"/>
</dbReference>
<dbReference type="NCBIfam" id="NF009214">
    <property type="entry name" value="PRK12563.1"/>
    <property type="match status" value="1"/>
</dbReference>
<dbReference type="PANTHER" id="PTHR43196">
    <property type="entry name" value="SULFATE ADENYLYLTRANSFERASE SUBUNIT 2"/>
    <property type="match status" value="1"/>
</dbReference>
<dbReference type="PANTHER" id="PTHR43196:SF1">
    <property type="entry name" value="SULFATE ADENYLYLTRANSFERASE SUBUNIT 2"/>
    <property type="match status" value="1"/>
</dbReference>
<dbReference type="Pfam" id="PF01507">
    <property type="entry name" value="PAPS_reduct"/>
    <property type="match status" value="1"/>
</dbReference>
<dbReference type="PIRSF" id="PIRSF002936">
    <property type="entry name" value="CysDAde_trans"/>
    <property type="match status" value="1"/>
</dbReference>
<dbReference type="SUPFAM" id="SSF52402">
    <property type="entry name" value="Adenine nucleotide alpha hydrolases-like"/>
    <property type="match status" value="1"/>
</dbReference>
<organism>
    <name type="scientific">Xanthomonas axonopodis pv. citri (strain 306)</name>
    <dbReference type="NCBI Taxonomy" id="190486"/>
    <lineage>
        <taxon>Bacteria</taxon>
        <taxon>Pseudomonadati</taxon>
        <taxon>Pseudomonadota</taxon>
        <taxon>Gammaproteobacteria</taxon>
        <taxon>Lysobacterales</taxon>
        <taxon>Lysobacteraceae</taxon>
        <taxon>Xanthomonas</taxon>
    </lineage>
</organism>
<keyword id="KW-0067">ATP-binding</keyword>
<keyword id="KW-0547">Nucleotide-binding</keyword>
<keyword id="KW-0548">Nucleotidyltransferase</keyword>
<keyword id="KW-0808">Transferase</keyword>
<feature type="chain" id="PRO_1000092230" description="Sulfate adenylyltransferase subunit 2">
    <location>
        <begin position="1"/>
        <end position="302"/>
    </location>
</feature>
<reference key="1">
    <citation type="journal article" date="2002" name="Nature">
        <title>Comparison of the genomes of two Xanthomonas pathogens with differing host specificities.</title>
        <authorList>
            <person name="da Silva A.C.R."/>
            <person name="Ferro J.A."/>
            <person name="Reinach F.C."/>
            <person name="Farah C.S."/>
            <person name="Furlan L.R."/>
            <person name="Quaggio R.B."/>
            <person name="Monteiro-Vitorello C.B."/>
            <person name="Van Sluys M.A."/>
            <person name="Almeida N.F. Jr."/>
            <person name="Alves L.M.C."/>
            <person name="do Amaral A.M."/>
            <person name="Bertolini M.C."/>
            <person name="Camargo L.E.A."/>
            <person name="Camarotte G."/>
            <person name="Cannavan F."/>
            <person name="Cardozo J."/>
            <person name="Chambergo F."/>
            <person name="Ciapina L.P."/>
            <person name="Cicarelli R.M.B."/>
            <person name="Coutinho L.L."/>
            <person name="Cursino-Santos J.R."/>
            <person name="El-Dorry H."/>
            <person name="Faria J.B."/>
            <person name="Ferreira A.J.S."/>
            <person name="Ferreira R.C.C."/>
            <person name="Ferro M.I.T."/>
            <person name="Formighieri E.F."/>
            <person name="Franco M.C."/>
            <person name="Greggio C.C."/>
            <person name="Gruber A."/>
            <person name="Katsuyama A.M."/>
            <person name="Kishi L.T."/>
            <person name="Leite R.P."/>
            <person name="Lemos E.G.M."/>
            <person name="Lemos M.V.F."/>
            <person name="Locali E.C."/>
            <person name="Machado M.A."/>
            <person name="Madeira A.M.B.N."/>
            <person name="Martinez-Rossi N.M."/>
            <person name="Martins E.C."/>
            <person name="Meidanis J."/>
            <person name="Menck C.F.M."/>
            <person name="Miyaki C.Y."/>
            <person name="Moon D.H."/>
            <person name="Moreira L.M."/>
            <person name="Novo M.T.M."/>
            <person name="Okura V.K."/>
            <person name="Oliveira M.C."/>
            <person name="Oliveira V.R."/>
            <person name="Pereira H.A."/>
            <person name="Rossi A."/>
            <person name="Sena J.A.D."/>
            <person name="Silva C."/>
            <person name="de Souza R.F."/>
            <person name="Spinola L.A.F."/>
            <person name="Takita M.A."/>
            <person name="Tamura R.E."/>
            <person name="Teixeira E.C."/>
            <person name="Tezza R.I.D."/>
            <person name="Trindade dos Santos M."/>
            <person name="Truffi D."/>
            <person name="Tsai S.M."/>
            <person name="White F.F."/>
            <person name="Setubal J.C."/>
            <person name="Kitajima J.P."/>
        </authorList>
    </citation>
    <scope>NUCLEOTIDE SEQUENCE [LARGE SCALE GENOMIC DNA]</scope>
    <source>
        <strain>306</strain>
    </source>
</reference>
<proteinExistence type="inferred from homology"/>
<evidence type="ECO:0000255" key="1">
    <source>
        <dbReference type="HAMAP-Rule" id="MF_00064"/>
    </source>
</evidence>